<feature type="transit peptide" description="Mitochondrion" evidence="1">
    <location>
        <begin position="1"/>
        <end position="27"/>
    </location>
</feature>
<feature type="chain" id="PRO_0000013479" description="Hydroxymethylglutaryl-CoA lyase, mitochondrial">
    <location>
        <begin position="28"/>
        <end position="325"/>
    </location>
</feature>
<feature type="domain" description="Pyruvate carboxyltransferase" evidence="5">
    <location>
        <begin position="33"/>
        <end position="300"/>
    </location>
</feature>
<feature type="short sequence motif" description="Microbody targeting signal" evidence="4">
    <location>
        <begin position="323"/>
        <end position="325"/>
    </location>
</feature>
<feature type="active site" evidence="6">
    <location>
        <position position="266"/>
    </location>
</feature>
<feature type="binding site" evidence="1">
    <location>
        <position position="41"/>
    </location>
    <ligand>
        <name>substrate</name>
    </ligand>
</feature>
<feature type="binding site" evidence="1">
    <location>
        <position position="42"/>
    </location>
    <ligand>
        <name>a divalent metal cation</name>
        <dbReference type="ChEBI" id="CHEBI:60240"/>
    </ligand>
</feature>
<feature type="binding site" evidence="1">
    <location>
        <position position="233"/>
    </location>
    <ligand>
        <name>a divalent metal cation</name>
        <dbReference type="ChEBI" id="CHEBI:60240"/>
    </ligand>
</feature>
<feature type="binding site" evidence="1">
    <location>
        <position position="235"/>
    </location>
    <ligand>
        <name>a divalent metal cation</name>
        <dbReference type="ChEBI" id="CHEBI:60240"/>
    </ligand>
</feature>
<feature type="binding site" evidence="1">
    <location>
        <position position="275"/>
    </location>
    <ligand>
        <name>a divalent metal cation</name>
        <dbReference type="ChEBI" id="CHEBI:60240"/>
    </ligand>
</feature>
<feature type="modified residue" description="N6-acetyllysine; alternate" evidence="2">
    <location>
        <position position="48"/>
    </location>
</feature>
<feature type="modified residue" description="N6-succinyllysine; alternate" evidence="3">
    <location>
        <position position="48"/>
    </location>
</feature>
<feature type="modified residue" description="N6-acetyllysine" evidence="3">
    <location>
        <position position="111"/>
    </location>
</feature>
<feature type="modified residue" description="N6-acetyllysine; alternate" evidence="3">
    <location>
        <position position="137"/>
    </location>
</feature>
<feature type="modified residue" description="N6-succinyllysine; alternate" evidence="3">
    <location>
        <position position="137"/>
    </location>
</feature>
<feature type="modified residue" description="N6-acetyllysine; alternate" evidence="3">
    <location>
        <position position="179"/>
    </location>
</feature>
<feature type="modified residue" description="N6-succinyllysine; alternate" evidence="3">
    <location>
        <position position="179"/>
    </location>
</feature>
<feature type="modified residue" description="N6-acetyllysine" evidence="3">
    <location>
        <position position="324"/>
    </location>
</feature>
<feature type="disulfide bond" description="Interchain" evidence="1">
    <location>
        <position position="323"/>
    </location>
</feature>
<proteinExistence type="evidence at transcript level"/>
<comment type="function">
    <text evidence="2">Mitochondrial 3-hydroxy-3-methylglutaryl-CoA lyase that catalyzes a cation-dependent cleavage of (S)-3-hydroxy-3-methylglutaryl-CoA into acetyl-CoA and acetoacetate, a key step in ketogenesis. Terminal step in leucine catabolism. Ketone bodies (beta-hydroxybutyrate, acetoacetate and acetone) are essential as an alternative source of energy to glucose, as lipid precursors and as regulators of metabolism.</text>
</comment>
<comment type="catalytic activity">
    <reaction evidence="2">
        <text>(3S)-3-hydroxy-3-methylglutaryl-CoA = acetoacetate + acetyl-CoA</text>
        <dbReference type="Rhea" id="RHEA:24404"/>
        <dbReference type="ChEBI" id="CHEBI:13705"/>
        <dbReference type="ChEBI" id="CHEBI:43074"/>
        <dbReference type="ChEBI" id="CHEBI:57288"/>
        <dbReference type="EC" id="4.1.3.4"/>
    </reaction>
</comment>
<comment type="pathway">
    <text>Metabolic intermediate metabolism; (S)-3-hydroxy-3-methylglutaryl-CoA degradation; acetoacetate from (S)-3-hydroxy-3-methylglutaryl-CoA: step 1/1.</text>
</comment>
<comment type="subunit">
    <text evidence="2">Homodimer; disulfide-linked. Can also form homotetramers.</text>
</comment>
<comment type="subcellular location">
    <subcellularLocation>
        <location evidence="3">Mitochondrion matrix</location>
    </subcellularLocation>
    <subcellularLocation>
        <location evidence="3">Peroxisome</location>
    </subcellularLocation>
    <text evidence="3">Unprocessed form is peroxisomal.</text>
</comment>
<comment type="similarity">
    <text evidence="7">Belongs to the HMG-CoA lyase family.</text>
</comment>
<name>HMGCL_MACFA</name>
<keyword id="KW-0007">Acetylation</keyword>
<keyword id="KW-1015">Disulfide bond</keyword>
<keyword id="KW-0443">Lipid metabolism</keyword>
<keyword id="KW-0456">Lyase</keyword>
<keyword id="KW-0479">Metal-binding</keyword>
<keyword id="KW-0496">Mitochondrion</keyword>
<keyword id="KW-0576">Peroxisome</keyword>
<keyword id="KW-1185">Reference proteome</keyword>
<keyword id="KW-0809">Transit peptide</keyword>
<evidence type="ECO:0000250" key="1"/>
<evidence type="ECO:0000250" key="2">
    <source>
        <dbReference type="UniProtKB" id="P35914"/>
    </source>
</evidence>
<evidence type="ECO:0000250" key="3">
    <source>
        <dbReference type="UniProtKB" id="P38060"/>
    </source>
</evidence>
<evidence type="ECO:0000255" key="4"/>
<evidence type="ECO:0000255" key="5">
    <source>
        <dbReference type="PROSITE-ProRule" id="PRU01151"/>
    </source>
</evidence>
<evidence type="ECO:0000255" key="6">
    <source>
        <dbReference type="PROSITE-ProRule" id="PRU10115"/>
    </source>
</evidence>
<evidence type="ECO:0000305" key="7"/>
<protein>
    <recommendedName>
        <fullName>Hydroxymethylglutaryl-CoA lyase, mitochondrial</fullName>
        <shortName>HL</shortName>
        <shortName>HMG-CoA lyase</shortName>
        <ecNumber evidence="2">4.1.3.4</ecNumber>
    </recommendedName>
    <alternativeName>
        <fullName>3-hydroxy-3-methylglutarate-CoA lyase</fullName>
    </alternativeName>
</protein>
<organism>
    <name type="scientific">Macaca fascicularis</name>
    <name type="common">Crab-eating macaque</name>
    <name type="synonym">Cynomolgus monkey</name>
    <dbReference type="NCBI Taxonomy" id="9541"/>
    <lineage>
        <taxon>Eukaryota</taxon>
        <taxon>Metazoa</taxon>
        <taxon>Chordata</taxon>
        <taxon>Craniata</taxon>
        <taxon>Vertebrata</taxon>
        <taxon>Euteleostomi</taxon>
        <taxon>Mammalia</taxon>
        <taxon>Eutheria</taxon>
        <taxon>Euarchontoglires</taxon>
        <taxon>Primates</taxon>
        <taxon>Haplorrhini</taxon>
        <taxon>Catarrhini</taxon>
        <taxon>Cercopithecidae</taxon>
        <taxon>Cercopithecinae</taxon>
        <taxon>Macaca</taxon>
    </lineage>
</organism>
<reference key="1">
    <citation type="submission" date="2002-04" db="EMBL/GenBank/DDBJ databases">
        <title>Isolation and characterization of cDNA for macaque neurological disease genes.</title>
        <authorList>
            <person name="Kusuda J."/>
            <person name="Osada N."/>
            <person name="Hida M."/>
            <person name="Sugano S."/>
            <person name="Hashimoto K."/>
        </authorList>
    </citation>
    <scope>NUCLEOTIDE SEQUENCE [LARGE SCALE MRNA]</scope>
    <source>
        <tissue>Brain cortex</tissue>
    </source>
</reference>
<accession>Q8HXZ6</accession>
<dbReference type="EC" id="4.1.3.4" evidence="2"/>
<dbReference type="EMBL" id="AB083316">
    <property type="protein sequence ID" value="BAC20595.1"/>
    <property type="molecule type" value="mRNA"/>
</dbReference>
<dbReference type="RefSeq" id="NP_001270179.1">
    <property type="nucleotide sequence ID" value="NM_001283250.1"/>
</dbReference>
<dbReference type="SMR" id="Q8HXZ6"/>
<dbReference type="STRING" id="9541.ENSMFAP00000003607"/>
<dbReference type="eggNOG" id="KOG2368">
    <property type="taxonomic scope" value="Eukaryota"/>
</dbReference>
<dbReference type="UniPathway" id="UPA00896">
    <property type="reaction ID" value="UER00863"/>
</dbReference>
<dbReference type="Proteomes" id="UP000233100">
    <property type="component" value="Unplaced"/>
</dbReference>
<dbReference type="GO" id="GO:0005759">
    <property type="term" value="C:mitochondrial matrix"/>
    <property type="evidence" value="ECO:0007669"/>
    <property type="project" value="UniProtKB-SubCell"/>
</dbReference>
<dbReference type="GO" id="GO:0005777">
    <property type="term" value="C:peroxisome"/>
    <property type="evidence" value="ECO:0007669"/>
    <property type="project" value="UniProtKB-SubCell"/>
</dbReference>
<dbReference type="GO" id="GO:0004419">
    <property type="term" value="F:hydroxymethylglutaryl-CoA lyase activity"/>
    <property type="evidence" value="ECO:0000250"/>
    <property type="project" value="UniProtKB"/>
</dbReference>
<dbReference type="GO" id="GO:0046872">
    <property type="term" value="F:metal ion binding"/>
    <property type="evidence" value="ECO:0000250"/>
    <property type="project" value="UniProtKB"/>
</dbReference>
<dbReference type="GO" id="GO:0046951">
    <property type="term" value="P:ketone body biosynthetic process"/>
    <property type="evidence" value="ECO:0000250"/>
    <property type="project" value="UniProtKB"/>
</dbReference>
<dbReference type="GO" id="GO:0006552">
    <property type="term" value="P:L-leucine catabolic process"/>
    <property type="evidence" value="ECO:0007669"/>
    <property type="project" value="TreeGrafter"/>
</dbReference>
<dbReference type="CDD" id="cd07938">
    <property type="entry name" value="DRE_TIM_HMGL"/>
    <property type="match status" value="1"/>
</dbReference>
<dbReference type="FunFam" id="3.20.20.70:FF:000038">
    <property type="entry name" value="Hydroxymethylglutaryl-CoA lyase, mitochondrial"/>
    <property type="match status" value="1"/>
</dbReference>
<dbReference type="Gene3D" id="3.20.20.70">
    <property type="entry name" value="Aldolase class I"/>
    <property type="match status" value="1"/>
</dbReference>
<dbReference type="InterPro" id="IPR013785">
    <property type="entry name" value="Aldolase_TIM"/>
</dbReference>
<dbReference type="InterPro" id="IPR000138">
    <property type="entry name" value="HMG_CoA_lyase_AS"/>
</dbReference>
<dbReference type="InterPro" id="IPR043594">
    <property type="entry name" value="HMGL"/>
</dbReference>
<dbReference type="InterPro" id="IPR000891">
    <property type="entry name" value="PYR_CT"/>
</dbReference>
<dbReference type="NCBIfam" id="NF004283">
    <property type="entry name" value="PRK05692.1"/>
    <property type="match status" value="1"/>
</dbReference>
<dbReference type="PANTHER" id="PTHR42738">
    <property type="entry name" value="HYDROXYMETHYLGLUTARYL-COA LYASE"/>
    <property type="match status" value="1"/>
</dbReference>
<dbReference type="PANTHER" id="PTHR42738:SF1">
    <property type="entry name" value="HYDROXYMETHYLGLUTARYL-COA LYASE, MITOCHONDRIAL"/>
    <property type="match status" value="1"/>
</dbReference>
<dbReference type="Pfam" id="PF00682">
    <property type="entry name" value="HMGL-like"/>
    <property type="match status" value="1"/>
</dbReference>
<dbReference type="SUPFAM" id="SSF51569">
    <property type="entry name" value="Aldolase"/>
    <property type="match status" value="1"/>
</dbReference>
<dbReference type="PROSITE" id="PS01062">
    <property type="entry name" value="HMG_COA_LYASE"/>
    <property type="match status" value="1"/>
</dbReference>
<dbReference type="PROSITE" id="PS50991">
    <property type="entry name" value="PYR_CT"/>
    <property type="match status" value="1"/>
</dbReference>
<sequence length="325" mass="34274">MAAMTKALPRRLVGLASLRAVSTSSMDTLPKQVKIVEVGPRDGLQNEKNIVSTPVKIKLIDMLSEAGLSVIEATSFVSPKWVPQMADHAEVLKGIQKFPGITYPVLIPNLKGFEAAVAAGAKEVSIFGAASELFTKKNVNCSIEESFQRFDAILKAAQSANISVRGYVSCVLGCPYEGKISPAKVAEVTKKFYSMGCYEISLGDTIGVGTPGIMKDMLSAVMQEVPPAALAVHCHDTYGQALANTLMALQMGVSVVDSSVAGLGGCPYAQGASGNLATEDLVYMLEGLGIHTGVNLQKLLEAGNFICQALNRKTSSKVAQATCKL</sequence>
<gene>
    <name type="primary">HMGCL</name>
    <name type="ORF">QccE-12283</name>
</gene>